<keyword id="KW-0025">Alternative splicing</keyword>
<keyword id="KW-0067">ATP-binding</keyword>
<keyword id="KW-0963">Cytoplasm</keyword>
<keyword id="KW-0418">Kinase</keyword>
<keyword id="KW-0547">Nucleotide-binding</keyword>
<keyword id="KW-0539">Nucleus</keyword>
<keyword id="KW-0597">Phosphoprotein</keyword>
<keyword id="KW-0611">Plant defense</keyword>
<keyword id="KW-1185">Reference proteome</keyword>
<keyword id="KW-0723">Serine/threonine-protein kinase</keyword>
<keyword id="KW-0808">Transferase</keyword>
<name>MPK5_ORYSJ</name>
<feature type="chain" id="PRO_0000239748" description="Mitogen-activated protein kinase 5">
    <location>
        <begin position="1"/>
        <end position="369"/>
    </location>
</feature>
<feature type="domain" description="Protein kinase" evidence="2">
    <location>
        <begin position="36"/>
        <end position="322"/>
    </location>
</feature>
<feature type="short sequence motif" description="TXY">
    <location>
        <begin position="194"/>
        <end position="196"/>
    </location>
</feature>
<feature type="active site" description="Proton acceptor" evidence="2 3">
    <location>
        <position position="162"/>
    </location>
</feature>
<feature type="binding site" evidence="2">
    <location>
        <begin position="42"/>
        <end position="50"/>
    </location>
    <ligand>
        <name>ATP</name>
        <dbReference type="ChEBI" id="CHEBI:30616"/>
    </ligand>
</feature>
<feature type="binding site" evidence="2">
    <location>
        <position position="65"/>
    </location>
    <ligand>
        <name>ATP</name>
        <dbReference type="ChEBI" id="CHEBI:30616"/>
    </ligand>
</feature>
<feature type="modified residue" description="Phosphothreonine" evidence="9">
    <location>
        <position position="14"/>
    </location>
</feature>
<feature type="modified residue" description="Phosphothreonine" evidence="9">
    <location>
        <position position="32"/>
    </location>
</feature>
<feature type="modified residue" description="Phosphothreonine" evidence="1">
    <location>
        <position position="194"/>
    </location>
</feature>
<feature type="modified residue" description="Phosphotyrosine" evidence="1">
    <location>
        <position position="196"/>
    </location>
</feature>
<feature type="splice variant" id="VSP_019261" description="In isoform MAPK5b." evidence="10">
    <location>
        <begin position="70"/>
        <end position="173"/>
    </location>
</feature>
<feature type="mutagenesis site" description="Loss of phosphorylation." evidence="9">
    <original>T</original>
    <variation>A</variation>
    <location>
        <position position="14"/>
    </location>
</feature>
<feature type="mutagenesis site" description="Loss of phosphorylation." evidence="9">
    <original>T</original>
    <variation>A</variation>
    <location>
        <position position="32"/>
    </location>
</feature>
<feature type="mutagenesis site" description="Loss of autophosphorylation." evidence="9">
    <original>K</original>
    <variation>R</variation>
    <location>
        <position position="65"/>
    </location>
</feature>
<feature type="sequence conflict" description="In Ref. 3; CAC13967." evidence="11" ref="3">
    <original>A</original>
    <variation>G</variation>
    <location>
        <position position="46"/>
    </location>
</feature>
<feature type="sequence conflict" description="In Ref. 3; CAC13967." evidence="11" ref="3">
    <original>H</original>
    <variation>L</variation>
    <location>
        <position position="89"/>
    </location>
</feature>
<dbReference type="EC" id="2.7.11.24"/>
<dbReference type="EMBL" id="AJ486975">
    <property type="protein sequence ID" value="CAD31224.1"/>
    <property type="molecule type" value="mRNA"/>
</dbReference>
<dbReference type="EMBL" id="AF216315">
    <property type="protein sequence ID" value="AAG40579.1"/>
    <property type="molecule type" value="mRNA"/>
</dbReference>
<dbReference type="EMBL" id="AJ250311">
    <property type="protein sequence ID" value="CAC13967.1"/>
    <property type="molecule type" value="mRNA"/>
</dbReference>
<dbReference type="EMBL" id="AF479883">
    <property type="protein sequence ID" value="AAL87689.1"/>
    <property type="molecule type" value="mRNA"/>
</dbReference>
<dbReference type="EMBL" id="AF479884">
    <property type="protein sequence ID" value="AAL87690.1"/>
    <property type="molecule type" value="mRNA"/>
</dbReference>
<dbReference type="EMBL" id="AC134232">
    <property type="protein sequence ID" value="AAO16999.1"/>
    <property type="status" value="ALT_INIT"/>
    <property type="molecule type" value="Genomic_DNA"/>
</dbReference>
<dbReference type="EMBL" id="DP000009">
    <property type="protein sequence ID" value="ABF95354.1"/>
    <property type="molecule type" value="Genomic_DNA"/>
</dbReference>
<dbReference type="EMBL" id="AP008209">
    <property type="protein sequence ID" value="BAF11684.1"/>
    <property type="molecule type" value="Genomic_DNA"/>
</dbReference>
<dbReference type="EMBL" id="AP014959">
    <property type="protein sequence ID" value="BAS83624.1"/>
    <property type="molecule type" value="Genomic_DNA"/>
</dbReference>
<dbReference type="EMBL" id="CM000140">
    <property type="protein sequence ID" value="EEE58837.1"/>
    <property type="molecule type" value="Genomic_DNA"/>
</dbReference>
<dbReference type="EMBL" id="AK067339">
    <property type="protein sequence ID" value="BAG90374.1"/>
    <property type="molecule type" value="mRNA"/>
</dbReference>
<dbReference type="EMBL" id="AK104834">
    <property type="protein sequence ID" value="BAG96983.1"/>
    <property type="molecule type" value="mRNA"/>
</dbReference>
<dbReference type="RefSeq" id="XP_015630496.1">
    <property type="nucleotide sequence ID" value="XM_015775010.1"/>
</dbReference>
<dbReference type="SMR" id="Q10N20"/>
<dbReference type="FunCoup" id="Q10N20">
    <property type="interactions" value="2409"/>
</dbReference>
<dbReference type="IntAct" id="Q10N20">
    <property type="interactions" value="2"/>
</dbReference>
<dbReference type="MINT" id="Q10N20"/>
<dbReference type="STRING" id="39947.Q10N20"/>
<dbReference type="iPTMnet" id="Q10N20"/>
<dbReference type="PaxDb" id="39947-Q10N20"/>
<dbReference type="EnsemblPlants" id="Os03t0285800-01">
    <molecule id="Q10N20-1"/>
    <property type="protein sequence ID" value="Os03t0285800-01"/>
    <property type="gene ID" value="Os03g0285800"/>
</dbReference>
<dbReference type="EnsemblPlants" id="Os03t0285800-02">
    <molecule id="Q10N20-1"/>
    <property type="protein sequence ID" value="Os03t0285800-02"/>
    <property type="gene ID" value="Os03g0285800"/>
</dbReference>
<dbReference type="Gramene" id="Os03t0285800-01">
    <molecule id="Q10N20-1"/>
    <property type="protein sequence ID" value="Os03t0285800-01"/>
    <property type="gene ID" value="Os03g0285800"/>
</dbReference>
<dbReference type="Gramene" id="Os03t0285800-02">
    <molecule id="Q10N20-1"/>
    <property type="protein sequence ID" value="Os03t0285800-02"/>
    <property type="gene ID" value="Os03g0285800"/>
</dbReference>
<dbReference type="KEGG" id="dosa:Os03g0285800"/>
<dbReference type="eggNOG" id="KOG0660">
    <property type="taxonomic scope" value="Eukaryota"/>
</dbReference>
<dbReference type="HOGENOM" id="CLU_000288_181_1_1"/>
<dbReference type="InParanoid" id="Q10N20"/>
<dbReference type="OMA" id="MDIPRPE"/>
<dbReference type="OrthoDB" id="192887at2759"/>
<dbReference type="PlantReactome" id="R-OSA-9675508">
    <property type="pathway name" value="Root elongation"/>
</dbReference>
<dbReference type="Proteomes" id="UP000000763">
    <property type="component" value="Chromosome 3"/>
</dbReference>
<dbReference type="Proteomes" id="UP000007752">
    <property type="component" value="Chromosome 3"/>
</dbReference>
<dbReference type="Proteomes" id="UP000059680">
    <property type="component" value="Chromosome 3"/>
</dbReference>
<dbReference type="GO" id="GO:0005737">
    <property type="term" value="C:cytoplasm"/>
    <property type="evidence" value="ECO:0000314"/>
    <property type="project" value="UniProtKB"/>
</dbReference>
<dbReference type="GO" id="GO:0005634">
    <property type="term" value="C:nucleus"/>
    <property type="evidence" value="ECO:0000314"/>
    <property type="project" value="UniProtKB"/>
</dbReference>
<dbReference type="GO" id="GO:0005524">
    <property type="term" value="F:ATP binding"/>
    <property type="evidence" value="ECO:0007669"/>
    <property type="project" value="UniProtKB-KW"/>
</dbReference>
<dbReference type="GO" id="GO:0004707">
    <property type="term" value="F:MAP kinase activity"/>
    <property type="evidence" value="ECO:0007669"/>
    <property type="project" value="UniProtKB-EC"/>
</dbReference>
<dbReference type="GO" id="GO:0106310">
    <property type="term" value="F:protein serine kinase activity"/>
    <property type="evidence" value="ECO:0007669"/>
    <property type="project" value="RHEA"/>
</dbReference>
<dbReference type="GO" id="GO:0004674">
    <property type="term" value="F:protein serine/threonine kinase activity"/>
    <property type="evidence" value="ECO:0000318"/>
    <property type="project" value="GO_Central"/>
</dbReference>
<dbReference type="GO" id="GO:0042742">
    <property type="term" value="P:defense response to bacterium"/>
    <property type="evidence" value="ECO:0000315"/>
    <property type="project" value="UniProtKB"/>
</dbReference>
<dbReference type="GO" id="GO:0050832">
    <property type="term" value="P:defense response to fungus"/>
    <property type="evidence" value="ECO:0000315"/>
    <property type="project" value="UniProtKB"/>
</dbReference>
<dbReference type="GO" id="GO:0035556">
    <property type="term" value="P:intracellular signal transduction"/>
    <property type="evidence" value="ECO:0000318"/>
    <property type="project" value="GO_Central"/>
</dbReference>
<dbReference type="GO" id="GO:1901002">
    <property type="term" value="P:positive regulation of response to salt stress"/>
    <property type="evidence" value="ECO:0000315"/>
    <property type="project" value="UniProtKB"/>
</dbReference>
<dbReference type="GO" id="GO:0009409">
    <property type="term" value="P:response to cold"/>
    <property type="evidence" value="ECO:0000315"/>
    <property type="project" value="UniProtKB"/>
</dbReference>
<dbReference type="GO" id="GO:0009414">
    <property type="term" value="P:response to water deprivation"/>
    <property type="evidence" value="ECO:0000315"/>
    <property type="project" value="UniProtKB"/>
</dbReference>
<dbReference type="FunFam" id="1.10.510.10:FF:000013">
    <property type="entry name" value="Mitogen-activated protein kinase"/>
    <property type="match status" value="1"/>
</dbReference>
<dbReference type="FunFam" id="3.30.200.20:FF:000046">
    <property type="entry name" value="Mitogen-activated protein kinase"/>
    <property type="match status" value="1"/>
</dbReference>
<dbReference type="Gene3D" id="3.30.200.20">
    <property type="entry name" value="Phosphorylase Kinase, domain 1"/>
    <property type="match status" value="1"/>
</dbReference>
<dbReference type="Gene3D" id="1.10.510.10">
    <property type="entry name" value="Transferase(Phosphotransferase) domain 1"/>
    <property type="match status" value="1"/>
</dbReference>
<dbReference type="InterPro" id="IPR011009">
    <property type="entry name" value="Kinase-like_dom_sf"/>
</dbReference>
<dbReference type="InterPro" id="IPR050117">
    <property type="entry name" value="MAP_kinase"/>
</dbReference>
<dbReference type="InterPro" id="IPR003527">
    <property type="entry name" value="MAP_kinase_CS"/>
</dbReference>
<dbReference type="InterPro" id="IPR008351">
    <property type="entry name" value="MAPK_JNK"/>
</dbReference>
<dbReference type="InterPro" id="IPR000719">
    <property type="entry name" value="Prot_kinase_dom"/>
</dbReference>
<dbReference type="InterPro" id="IPR017441">
    <property type="entry name" value="Protein_kinase_ATP_BS"/>
</dbReference>
<dbReference type="InterPro" id="IPR008271">
    <property type="entry name" value="Ser/Thr_kinase_AS"/>
</dbReference>
<dbReference type="PANTHER" id="PTHR24055">
    <property type="entry name" value="MITOGEN-ACTIVATED PROTEIN KINASE"/>
    <property type="match status" value="1"/>
</dbReference>
<dbReference type="Pfam" id="PF00069">
    <property type="entry name" value="Pkinase"/>
    <property type="match status" value="1"/>
</dbReference>
<dbReference type="PRINTS" id="PR01772">
    <property type="entry name" value="JNKMAPKINASE"/>
</dbReference>
<dbReference type="SMART" id="SM00220">
    <property type="entry name" value="S_TKc"/>
    <property type="match status" value="1"/>
</dbReference>
<dbReference type="SUPFAM" id="SSF56112">
    <property type="entry name" value="Protein kinase-like (PK-like)"/>
    <property type="match status" value="1"/>
</dbReference>
<dbReference type="PROSITE" id="PS01351">
    <property type="entry name" value="MAPK"/>
    <property type="match status" value="1"/>
</dbReference>
<dbReference type="PROSITE" id="PS00107">
    <property type="entry name" value="PROTEIN_KINASE_ATP"/>
    <property type="match status" value="1"/>
</dbReference>
<dbReference type="PROSITE" id="PS50011">
    <property type="entry name" value="PROTEIN_KINASE_DOM"/>
    <property type="match status" value="1"/>
</dbReference>
<dbReference type="PROSITE" id="PS00108">
    <property type="entry name" value="PROTEIN_KINASE_ST"/>
    <property type="match status" value="1"/>
</dbReference>
<evidence type="ECO:0000250" key="1"/>
<evidence type="ECO:0000255" key="2">
    <source>
        <dbReference type="PROSITE-ProRule" id="PRU00159"/>
    </source>
</evidence>
<evidence type="ECO:0000255" key="3">
    <source>
        <dbReference type="PROSITE-ProRule" id="PRU10027"/>
    </source>
</evidence>
<evidence type="ECO:0000269" key="4">
    <source>
    </source>
</evidence>
<evidence type="ECO:0000269" key="5">
    <source>
    </source>
</evidence>
<evidence type="ECO:0000269" key="6">
    <source>
    </source>
</evidence>
<evidence type="ECO:0000269" key="7">
    <source>
    </source>
</evidence>
<evidence type="ECO:0000269" key="8">
    <source>
    </source>
</evidence>
<evidence type="ECO:0000269" key="9">
    <source>
    </source>
</evidence>
<evidence type="ECO:0000303" key="10">
    <source>
    </source>
</evidence>
<evidence type="ECO:0000305" key="11"/>
<evidence type="ECO:0000312" key="12">
    <source>
        <dbReference type="EMBL" id="EEE58837.1"/>
    </source>
</evidence>
<reference key="1">
    <citation type="journal article" date="2002" name="Biochem. Biophys. Res. Commun.">
        <title>Isolation of novel rice (Oryza sativa L.) multiple stress responsive MAP kinase gene, OsMSRMK2, whose mRNA accumulates rapidly in response to environmental cues.</title>
        <authorList>
            <person name="Agrawal G.K."/>
            <person name="Rakwal R."/>
            <person name="Iwahashi H."/>
        </authorList>
    </citation>
    <scope>NUCLEOTIDE SEQUENCE [MRNA] (ISOFORM MAPK5A)</scope>
    <scope>INDUCTION</scope>
    <source>
        <strain>cv. Nipponbare</strain>
        <tissue>Leaf</tissue>
    </source>
</reference>
<reference key="2">
    <citation type="journal article" date="2002" name="Plant Physiol.">
        <title>Two novel mitogen-activated protein signaling components, OsMEK1 and OsMAP1, are involved in a moderate low-temperature signaling pathway in rice.</title>
        <authorList>
            <person name="Wen J.-Q."/>
            <person name="Oono K."/>
            <person name="Imai R."/>
        </authorList>
    </citation>
    <scope>NUCLEOTIDE SEQUENCE [MRNA] (ISOFORM MAPK5A)</scope>
    <scope>ACTIVITY REGULATION</scope>
    <scope>INTERACTION WITH MKK1</scope>
    <scope>INDUCTION</scope>
</reference>
<reference key="3">
    <citation type="journal article" date="2002" name="Physiol. Plantarum">
        <title>Expression of Oryza sativa MAP kinase gene is developmentally regulated and stress-responsive.</title>
        <authorList>
            <person name="Huang H.-J."/>
            <person name="Fu S.-F."/>
            <person name="Tai Y.-H."/>
            <person name="Chou W.-C."/>
            <person name="Huang D.-D."/>
        </authorList>
    </citation>
    <scope>NUCLEOTIDE SEQUENCE [MRNA] (ISOFORM MAPK5A)</scope>
    <scope>TISSUE SPECIFICITY</scope>
    <scope>INDUCTION</scope>
    <scope>PHOSPHORYLATION</scope>
</reference>
<reference key="4">
    <citation type="journal article" date="2003" name="Plant Cell">
        <title>Disease resistance and abiotic stress tolerance in rice are inversely modulated by an abscisic acid-inducible mitogen-activated protein kinase.</title>
        <authorList>
            <person name="Xiong L."/>
            <person name="Yang Y."/>
        </authorList>
    </citation>
    <scope>NUCLEOTIDE SEQUENCE [MRNA] (ISOFORMS MAPK5A AND MAPK5B)</scope>
    <scope>FUNCTION</scope>
    <scope>ACTIVITY REGULATION</scope>
    <scope>INDUCTION</scope>
    <scope>ALTERNATIVE SPLICING</scope>
</reference>
<reference key="5">
    <citation type="journal article" date="2005" name="Genome Res.">
        <title>Sequence, annotation, and analysis of synteny between rice chromosome 3 and diverged grass species.</title>
        <authorList>
            <consortium name="The rice chromosome 3 sequencing consortium"/>
            <person name="Buell C.R."/>
            <person name="Yuan Q."/>
            <person name="Ouyang S."/>
            <person name="Liu J."/>
            <person name="Zhu W."/>
            <person name="Wang A."/>
            <person name="Maiti R."/>
            <person name="Haas B."/>
            <person name="Wortman J."/>
            <person name="Pertea M."/>
            <person name="Jones K.M."/>
            <person name="Kim M."/>
            <person name="Overton L."/>
            <person name="Tsitrin T."/>
            <person name="Fadrosh D."/>
            <person name="Bera J."/>
            <person name="Weaver B."/>
            <person name="Jin S."/>
            <person name="Johri S."/>
            <person name="Reardon M."/>
            <person name="Webb K."/>
            <person name="Hill J."/>
            <person name="Moffat K."/>
            <person name="Tallon L."/>
            <person name="Van Aken S."/>
            <person name="Lewis M."/>
            <person name="Utterback T."/>
            <person name="Feldblyum T."/>
            <person name="Zismann V."/>
            <person name="Iobst S."/>
            <person name="Hsiao J."/>
            <person name="de Vazeille A.R."/>
            <person name="Salzberg S.L."/>
            <person name="White O."/>
            <person name="Fraser C.M."/>
            <person name="Yu Y."/>
            <person name="Kim H."/>
            <person name="Rambo T."/>
            <person name="Currie J."/>
            <person name="Collura K."/>
            <person name="Kernodle-Thompson S."/>
            <person name="Wei F."/>
            <person name="Kudrna K."/>
            <person name="Ammiraju J.S.S."/>
            <person name="Luo M."/>
            <person name="Goicoechea J.L."/>
            <person name="Wing R.A."/>
            <person name="Henry D."/>
            <person name="Oates R."/>
            <person name="Palmer M."/>
            <person name="Pries G."/>
            <person name="Saski C."/>
            <person name="Simmons J."/>
            <person name="Soderlund C."/>
            <person name="Nelson W."/>
            <person name="de la Bastide M."/>
            <person name="Spiegel L."/>
            <person name="Nascimento L."/>
            <person name="Huang E."/>
            <person name="Preston R."/>
            <person name="Zutavern T."/>
            <person name="Palmer L."/>
            <person name="O'Shaughnessy A."/>
            <person name="Dike S."/>
            <person name="McCombie W.R."/>
            <person name="Minx P."/>
            <person name="Cordum H."/>
            <person name="Wilson R."/>
            <person name="Jin W."/>
            <person name="Lee H.R."/>
            <person name="Jiang J."/>
            <person name="Jackson S."/>
        </authorList>
    </citation>
    <scope>NUCLEOTIDE SEQUENCE [LARGE SCALE GENOMIC DNA]</scope>
    <source>
        <strain>cv. Nipponbare</strain>
    </source>
</reference>
<reference key="6">
    <citation type="journal article" date="2005" name="Nature">
        <title>The map-based sequence of the rice genome.</title>
        <authorList>
            <consortium name="International rice genome sequencing project (IRGSP)"/>
        </authorList>
    </citation>
    <scope>NUCLEOTIDE SEQUENCE [LARGE SCALE GENOMIC DNA]</scope>
    <source>
        <strain>cv. Nipponbare</strain>
    </source>
</reference>
<reference key="7">
    <citation type="journal article" date="2008" name="Nucleic Acids Res.">
        <title>The rice annotation project database (RAP-DB): 2008 update.</title>
        <authorList>
            <consortium name="The rice annotation project (RAP)"/>
        </authorList>
    </citation>
    <scope>GENOME REANNOTATION</scope>
    <source>
        <strain>cv. Nipponbare</strain>
    </source>
</reference>
<reference key="8">
    <citation type="journal article" date="2013" name="Rice">
        <title>Improvement of the Oryza sativa Nipponbare reference genome using next generation sequence and optical map data.</title>
        <authorList>
            <person name="Kawahara Y."/>
            <person name="de la Bastide M."/>
            <person name="Hamilton J.P."/>
            <person name="Kanamori H."/>
            <person name="McCombie W.R."/>
            <person name="Ouyang S."/>
            <person name="Schwartz D.C."/>
            <person name="Tanaka T."/>
            <person name="Wu J."/>
            <person name="Zhou S."/>
            <person name="Childs K.L."/>
            <person name="Davidson R.M."/>
            <person name="Lin H."/>
            <person name="Quesada-Ocampo L."/>
            <person name="Vaillancourt B."/>
            <person name="Sakai H."/>
            <person name="Lee S.S."/>
            <person name="Kim J."/>
            <person name="Numa H."/>
            <person name="Itoh T."/>
            <person name="Buell C.R."/>
            <person name="Matsumoto T."/>
        </authorList>
    </citation>
    <scope>GENOME REANNOTATION</scope>
    <source>
        <strain>cv. Nipponbare</strain>
    </source>
</reference>
<reference key="9">
    <citation type="journal article" date="2005" name="PLoS Biol.">
        <title>The genomes of Oryza sativa: a history of duplications.</title>
        <authorList>
            <person name="Yu J."/>
            <person name="Wang J."/>
            <person name="Lin W."/>
            <person name="Li S."/>
            <person name="Li H."/>
            <person name="Zhou J."/>
            <person name="Ni P."/>
            <person name="Dong W."/>
            <person name="Hu S."/>
            <person name="Zeng C."/>
            <person name="Zhang J."/>
            <person name="Zhang Y."/>
            <person name="Li R."/>
            <person name="Xu Z."/>
            <person name="Li S."/>
            <person name="Li X."/>
            <person name="Zheng H."/>
            <person name="Cong L."/>
            <person name="Lin L."/>
            <person name="Yin J."/>
            <person name="Geng J."/>
            <person name="Li G."/>
            <person name="Shi J."/>
            <person name="Liu J."/>
            <person name="Lv H."/>
            <person name="Li J."/>
            <person name="Wang J."/>
            <person name="Deng Y."/>
            <person name="Ran L."/>
            <person name="Shi X."/>
            <person name="Wang X."/>
            <person name="Wu Q."/>
            <person name="Li C."/>
            <person name="Ren X."/>
            <person name="Wang J."/>
            <person name="Wang X."/>
            <person name="Li D."/>
            <person name="Liu D."/>
            <person name="Zhang X."/>
            <person name="Ji Z."/>
            <person name="Zhao W."/>
            <person name="Sun Y."/>
            <person name="Zhang Z."/>
            <person name="Bao J."/>
            <person name="Han Y."/>
            <person name="Dong L."/>
            <person name="Ji J."/>
            <person name="Chen P."/>
            <person name="Wu S."/>
            <person name="Liu J."/>
            <person name="Xiao Y."/>
            <person name="Bu D."/>
            <person name="Tan J."/>
            <person name="Yang L."/>
            <person name="Ye C."/>
            <person name="Zhang J."/>
            <person name="Xu J."/>
            <person name="Zhou Y."/>
            <person name="Yu Y."/>
            <person name="Zhang B."/>
            <person name="Zhuang S."/>
            <person name="Wei H."/>
            <person name="Liu B."/>
            <person name="Lei M."/>
            <person name="Yu H."/>
            <person name="Li Y."/>
            <person name="Xu H."/>
            <person name="Wei S."/>
            <person name="He X."/>
            <person name="Fang L."/>
            <person name="Zhang Z."/>
            <person name="Zhang Y."/>
            <person name="Huang X."/>
            <person name="Su Z."/>
            <person name="Tong W."/>
            <person name="Li J."/>
            <person name="Tong Z."/>
            <person name="Li S."/>
            <person name="Ye J."/>
            <person name="Wang L."/>
            <person name="Fang L."/>
            <person name="Lei T."/>
            <person name="Chen C.-S."/>
            <person name="Chen H.-C."/>
            <person name="Xu Z."/>
            <person name="Li H."/>
            <person name="Huang H."/>
            <person name="Zhang F."/>
            <person name="Xu H."/>
            <person name="Li N."/>
            <person name="Zhao C."/>
            <person name="Li S."/>
            <person name="Dong L."/>
            <person name="Huang Y."/>
            <person name="Li L."/>
            <person name="Xi Y."/>
            <person name="Qi Q."/>
            <person name="Li W."/>
            <person name="Zhang B."/>
            <person name="Hu W."/>
            <person name="Zhang Y."/>
            <person name="Tian X."/>
            <person name="Jiao Y."/>
            <person name="Liang X."/>
            <person name="Jin J."/>
            <person name="Gao L."/>
            <person name="Zheng W."/>
            <person name="Hao B."/>
            <person name="Liu S.-M."/>
            <person name="Wang W."/>
            <person name="Yuan L."/>
            <person name="Cao M."/>
            <person name="McDermott J."/>
            <person name="Samudrala R."/>
            <person name="Wang J."/>
            <person name="Wong G.K.-S."/>
            <person name="Yang H."/>
        </authorList>
    </citation>
    <scope>NUCLEOTIDE SEQUENCE [LARGE SCALE GENOMIC DNA]</scope>
    <source>
        <strain>cv. Nipponbare</strain>
    </source>
</reference>
<reference key="10">
    <citation type="journal article" date="2003" name="Science">
        <title>Collection, mapping, and annotation of over 28,000 cDNA clones from japonica rice.</title>
        <authorList>
            <consortium name="The rice full-length cDNA consortium"/>
        </authorList>
    </citation>
    <scope>NUCLEOTIDE SEQUENCE [LARGE SCALE MRNA]</scope>
    <source>
        <strain>cv. Nipponbare</strain>
    </source>
</reference>
<reference key="11">
    <citation type="journal article" date="2006" name="Mol. Plant Microbe Interact.">
        <title>Molecular analysis of the rice MAP kinase gene family in relation to Magnaporthe grisea infection.</title>
        <authorList>
            <person name="Reyna N.S."/>
            <person name="Yang Y."/>
        </authorList>
    </citation>
    <scope>INDUCTION</scope>
    <scope>NOMENCLATURE</scope>
</reference>
<reference key="12">
    <citation type="journal article" date="2014" name="Plant Cell">
        <title>Direct phosphorylation and activation of a mitogen-activated protein kinase by a calcium-dependent protein kinase in rice.</title>
        <authorList>
            <person name="Xie K."/>
            <person name="Chen J."/>
            <person name="Wang Q."/>
            <person name="Yang Y."/>
        </authorList>
    </citation>
    <scope>FUNCTION</scope>
    <scope>INTERACTION WITH CPK18</scope>
    <scope>SUBCELLULAR LOCATION</scope>
    <scope>PHOSPHORYLATION AT THR-14 AND THR-32</scope>
    <scope>MUTAGENESIS OF THR-14; THR-32 AND LYS-65</scope>
</reference>
<proteinExistence type="evidence at protein level"/>
<accession>Q10N20</accession>
<accession>B7EDC7</accession>
<accession>Q7FNE2</accession>
<accession>Q8GZZ3</accession>
<accession>Q8S3T6</accession>
<accession>Q9AXF2</accession>
<accession>Q9FQM3</accession>
<accession>Q9FSE6</accession>
<gene>
    <name type="primary">MPK5</name>
    <name type="synonym">BIMK1</name>
    <name type="synonym">MAPK2</name>
    <name type="synonym">MAPK5</name>
    <name type="synonym">MPK3</name>
    <name type="synonym">MSRMK2</name>
    <name type="ordered locus">Os03g0285800</name>
    <name type="ordered locus">LOC_Os03g17700</name>
    <name evidence="12" type="ORF">OsJ_10412</name>
    <name type="ORF">OSJNBa0013D02.9</name>
</gene>
<protein>
    <recommendedName>
        <fullName>Mitogen-activated protein kinase 5</fullName>
        <shortName>MAP kinase 5</shortName>
        <ecNumber>2.7.11.24</ecNumber>
    </recommendedName>
    <alternativeName>
        <fullName>Benzothiadiazole-induced MAP kinase 1</fullName>
    </alternativeName>
    <alternativeName>
        <fullName>MAP kinase 2</fullName>
    </alternativeName>
    <alternativeName>
        <fullName>Multiple stress-responsive MAP kinase 2</fullName>
    </alternativeName>
    <alternativeName>
        <fullName>OsBIMK1</fullName>
    </alternativeName>
    <alternativeName>
        <fullName>OsMAP1</fullName>
    </alternativeName>
    <alternativeName>
        <fullName>OsMAPK2</fullName>
    </alternativeName>
    <alternativeName>
        <fullName>OsMAPK5</fullName>
    </alternativeName>
    <alternativeName>
        <fullName>OsMPK3</fullName>
    </alternativeName>
    <alternativeName>
        <fullName>OsMSRMK2</fullName>
    </alternativeName>
</protein>
<organism>
    <name type="scientific">Oryza sativa subsp. japonica</name>
    <name type="common">Rice</name>
    <dbReference type="NCBI Taxonomy" id="39947"/>
    <lineage>
        <taxon>Eukaryota</taxon>
        <taxon>Viridiplantae</taxon>
        <taxon>Streptophyta</taxon>
        <taxon>Embryophyta</taxon>
        <taxon>Tracheophyta</taxon>
        <taxon>Spermatophyta</taxon>
        <taxon>Magnoliopsida</taxon>
        <taxon>Liliopsida</taxon>
        <taxon>Poales</taxon>
        <taxon>Poaceae</taxon>
        <taxon>BOP clade</taxon>
        <taxon>Oryzoideae</taxon>
        <taxon>Oryzeae</taxon>
        <taxon>Oryzinae</taxon>
        <taxon>Oryza</taxon>
        <taxon>Oryza sativa</taxon>
    </lineage>
</organism>
<comment type="function">
    <text evidence="7 9">Involved in disease resistance and abiotic stress tolerance signaling pathways. Acts as a positive regulator of drought, salt and cold tolerance. Negatively modulates pathogenesis-related (PR) gene expression and broad-spectrum disease resistance (PubMed:12615946). Functions downstream of CPK18 in a signaling pathway that represses defense gene expression and negatively regulates resistance to rice blast fungus. Phosphorylated by CPK18 at Thr-14 and Thr-32 and activated independently of MAP kinase kinase (MKK) phosphorylation (PubMed:25035404).</text>
</comment>
<comment type="catalytic activity">
    <reaction>
        <text>L-seryl-[protein] + ATP = O-phospho-L-seryl-[protein] + ADP + H(+)</text>
        <dbReference type="Rhea" id="RHEA:17989"/>
        <dbReference type="Rhea" id="RHEA-COMP:9863"/>
        <dbReference type="Rhea" id="RHEA-COMP:11604"/>
        <dbReference type="ChEBI" id="CHEBI:15378"/>
        <dbReference type="ChEBI" id="CHEBI:29999"/>
        <dbReference type="ChEBI" id="CHEBI:30616"/>
        <dbReference type="ChEBI" id="CHEBI:83421"/>
        <dbReference type="ChEBI" id="CHEBI:456216"/>
        <dbReference type="EC" id="2.7.11.24"/>
    </reaction>
</comment>
<comment type="catalytic activity">
    <reaction>
        <text>L-threonyl-[protein] + ATP = O-phospho-L-threonyl-[protein] + ADP + H(+)</text>
        <dbReference type="Rhea" id="RHEA:46608"/>
        <dbReference type="Rhea" id="RHEA-COMP:11060"/>
        <dbReference type="Rhea" id="RHEA-COMP:11605"/>
        <dbReference type="ChEBI" id="CHEBI:15378"/>
        <dbReference type="ChEBI" id="CHEBI:30013"/>
        <dbReference type="ChEBI" id="CHEBI:30616"/>
        <dbReference type="ChEBI" id="CHEBI:61977"/>
        <dbReference type="ChEBI" id="CHEBI:456216"/>
        <dbReference type="EC" id="2.7.11.24"/>
    </reaction>
</comment>
<comment type="activity regulation">
    <text evidence="1 6 7 9">Activated by threonine and tyrosine phosphorylation (By similarity). Activated in response to low temperature (12 degrees Celsius) treatment (PubMed:12177502, PubMed:12615946). Activated by phosphorylation at Thr-14 and Thr-32 by CPK18 (PubMed:25035404).</text>
</comment>
<comment type="subunit">
    <text evidence="6 9">Interacts with MKK1 (PubMed:12177502). Interacts with CPK18 (PubMed:25035404).</text>
</comment>
<comment type="subcellular location">
    <subcellularLocation>
        <location evidence="9">Nucleus</location>
    </subcellularLocation>
    <subcellularLocation>
        <location evidence="9">Cytoplasm</location>
    </subcellularLocation>
</comment>
<comment type="alternative products">
    <event type="alternative splicing"/>
    <isoform>
        <id>Q10N20-1</id>
        <id>Q7FNE2-1</id>
        <name>MAPK5a</name>
        <sequence type="displayed"/>
    </isoform>
    <isoform>
        <id>Q10N20-2</id>
        <id>Q7FNE2-2</id>
        <name>MAPK5b</name>
        <sequence type="described" ref="VSP_019261"/>
    </isoform>
</comment>
<comment type="tissue specificity">
    <text evidence="4">Expressed in roots, stems and panicles, and at lower levels in leaves.</text>
</comment>
<comment type="induction">
    <text evidence="4 5 6 7 8">By benzothiadiazole (BTH), dichloroisonicotinic acid, probenazole, jasmonic acid, wounding and infection with P.syringae and M.grisea, by stresses, hormones, heavy metals, high/low temperature, UV-C and phosphatase inhibitors.</text>
</comment>
<comment type="domain">
    <text>The TXY motif contains the threonine and tyrosine residues whose phosphorylation activates the MAP kinases.</text>
</comment>
<comment type="PTM">
    <text evidence="1 9">Dually phosphorylated at Thr-194 and Tyr-196, which activates the enzyme (By similarity). Autophosphorylated. Phosphorylated by CPK18 at Thr-14 and Thr-32, which activates the enzyme (PubMed:25035404).</text>
</comment>
<comment type="miscellaneous">
    <molecule>Isoform MAPK5b</molecule>
    <text evidence="11">Does not possess kinase activity.</text>
</comment>
<comment type="similarity">
    <text evidence="11">Belongs to the protein kinase superfamily. CMGC Ser/Thr protein kinase family. MAP kinase subfamily.</text>
</comment>
<comment type="sequence caution" evidence="11">
    <conflict type="erroneous initiation">
        <sequence resource="EMBL-CDS" id="AAO16999"/>
    </conflict>
    <text>Truncated N-terminus.</text>
</comment>
<sequence>MDGAPVAEFRPTMTHGGRYLLYDIFGNKFEVTNKYQPPIMPIGRGAYGIVCSVMNFETREMVAIKKIANAFNNDMDAKRTLREIKLLRHLDHENIIGIRDVIPPPIPQAFNDVYIATELMDTDLHHIIRSNQELSEEHCQYFLYQILRGLKYIHSANVIHRDLKPSNLLLNANCDLKICDFGLARPSSESDMMTEYVVTRWYRAPELLLNSTDYSAAIDVWSVGCIFMELINRQPLFPGRDHMHQMRLITEVIGTPTDDELGFIRNEDARKYMRHLPQYPRRTFASMFPRVQPAALDLIERMLTFNPLQRITVEEALDHPYLERLHDIADEPICLEPFSFDFEQKALNEDQMKQLIFNEAIEMNPNIRY</sequence>